<keyword id="KW-0028">Amino-acid biosynthesis</keyword>
<keyword id="KW-0057">Aromatic amino acid biosynthesis</keyword>
<keyword id="KW-0456">Lyase</keyword>
<keyword id="KW-0822">Tryptophan biosynthesis</keyword>
<feature type="chain" id="PRO_1000095761" description="Tryptophan synthase alpha chain">
    <location>
        <begin position="1"/>
        <end position="272"/>
    </location>
</feature>
<feature type="active site" description="Proton acceptor" evidence="1">
    <location>
        <position position="53"/>
    </location>
</feature>
<feature type="active site" description="Proton acceptor" evidence="1">
    <location>
        <position position="64"/>
    </location>
</feature>
<organism>
    <name type="scientific">Xanthomonas campestris pv. campestris (strain B100)</name>
    <dbReference type="NCBI Taxonomy" id="509169"/>
    <lineage>
        <taxon>Bacteria</taxon>
        <taxon>Pseudomonadati</taxon>
        <taxon>Pseudomonadota</taxon>
        <taxon>Gammaproteobacteria</taxon>
        <taxon>Lysobacterales</taxon>
        <taxon>Lysobacteraceae</taxon>
        <taxon>Xanthomonas</taxon>
    </lineage>
</organism>
<protein>
    <recommendedName>
        <fullName evidence="1">Tryptophan synthase alpha chain</fullName>
        <ecNumber evidence="1">4.2.1.20</ecNumber>
    </recommendedName>
</protein>
<accession>B0RR86</accession>
<proteinExistence type="inferred from homology"/>
<name>TRPA_XANCB</name>
<dbReference type="EC" id="4.2.1.20" evidence="1"/>
<dbReference type="EMBL" id="AM920689">
    <property type="protein sequence ID" value="CAP50971.1"/>
    <property type="molecule type" value="Genomic_DNA"/>
</dbReference>
<dbReference type="SMR" id="B0RR86"/>
<dbReference type="KEGG" id="xca:xcc-b100_1621"/>
<dbReference type="HOGENOM" id="CLU_016734_0_4_6"/>
<dbReference type="UniPathway" id="UPA00035">
    <property type="reaction ID" value="UER00044"/>
</dbReference>
<dbReference type="Proteomes" id="UP000001188">
    <property type="component" value="Chromosome"/>
</dbReference>
<dbReference type="GO" id="GO:0005829">
    <property type="term" value="C:cytosol"/>
    <property type="evidence" value="ECO:0007669"/>
    <property type="project" value="TreeGrafter"/>
</dbReference>
<dbReference type="GO" id="GO:0004834">
    <property type="term" value="F:tryptophan synthase activity"/>
    <property type="evidence" value="ECO:0007669"/>
    <property type="project" value="UniProtKB-UniRule"/>
</dbReference>
<dbReference type="CDD" id="cd04724">
    <property type="entry name" value="Tryptophan_synthase_alpha"/>
    <property type="match status" value="1"/>
</dbReference>
<dbReference type="FunFam" id="3.20.20.70:FF:000037">
    <property type="entry name" value="Tryptophan synthase alpha chain"/>
    <property type="match status" value="1"/>
</dbReference>
<dbReference type="Gene3D" id="3.20.20.70">
    <property type="entry name" value="Aldolase class I"/>
    <property type="match status" value="1"/>
</dbReference>
<dbReference type="HAMAP" id="MF_00131">
    <property type="entry name" value="Trp_synth_alpha"/>
    <property type="match status" value="1"/>
</dbReference>
<dbReference type="InterPro" id="IPR013785">
    <property type="entry name" value="Aldolase_TIM"/>
</dbReference>
<dbReference type="InterPro" id="IPR011060">
    <property type="entry name" value="RibuloseP-bd_barrel"/>
</dbReference>
<dbReference type="InterPro" id="IPR018204">
    <property type="entry name" value="Trp_synthase_alpha_AS"/>
</dbReference>
<dbReference type="InterPro" id="IPR002028">
    <property type="entry name" value="Trp_synthase_suA"/>
</dbReference>
<dbReference type="NCBIfam" id="TIGR00262">
    <property type="entry name" value="trpA"/>
    <property type="match status" value="1"/>
</dbReference>
<dbReference type="PANTHER" id="PTHR43406:SF1">
    <property type="entry name" value="TRYPTOPHAN SYNTHASE ALPHA CHAIN, CHLOROPLASTIC"/>
    <property type="match status" value="1"/>
</dbReference>
<dbReference type="PANTHER" id="PTHR43406">
    <property type="entry name" value="TRYPTOPHAN SYNTHASE, ALPHA CHAIN"/>
    <property type="match status" value="1"/>
</dbReference>
<dbReference type="Pfam" id="PF00290">
    <property type="entry name" value="Trp_syntA"/>
    <property type="match status" value="1"/>
</dbReference>
<dbReference type="SUPFAM" id="SSF51366">
    <property type="entry name" value="Ribulose-phoshate binding barrel"/>
    <property type="match status" value="1"/>
</dbReference>
<dbReference type="PROSITE" id="PS00167">
    <property type="entry name" value="TRP_SYNTHASE_ALPHA"/>
    <property type="match status" value="1"/>
</dbReference>
<comment type="function">
    <text evidence="1">The alpha subunit is responsible for the aldol cleavage of indoleglycerol phosphate to indole and glyceraldehyde 3-phosphate.</text>
</comment>
<comment type="catalytic activity">
    <reaction evidence="1">
        <text>(1S,2R)-1-C-(indol-3-yl)glycerol 3-phosphate + L-serine = D-glyceraldehyde 3-phosphate + L-tryptophan + H2O</text>
        <dbReference type="Rhea" id="RHEA:10532"/>
        <dbReference type="ChEBI" id="CHEBI:15377"/>
        <dbReference type="ChEBI" id="CHEBI:33384"/>
        <dbReference type="ChEBI" id="CHEBI:57912"/>
        <dbReference type="ChEBI" id="CHEBI:58866"/>
        <dbReference type="ChEBI" id="CHEBI:59776"/>
        <dbReference type="EC" id="4.2.1.20"/>
    </reaction>
</comment>
<comment type="pathway">
    <text evidence="1">Amino-acid biosynthesis; L-tryptophan biosynthesis; L-tryptophan from chorismate: step 5/5.</text>
</comment>
<comment type="subunit">
    <text evidence="1">Tetramer of two alpha and two beta chains.</text>
</comment>
<comment type="similarity">
    <text evidence="1">Belongs to the TrpA family.</text>
</comment>
<evidence type="ECO:0000255" key="1">
    <source>
        <dbReference type="HAMAP-Rule" id="MF_00131"/>
    </source>
</evidence>
<sequence length="272" mass="28397">MSRAPDRIAACFDALRHSGRKALIPFITAGDPSLEATVPVMHALVRAGANIIELGVPFSDPMADGPTIQRSSERALGRGAGLAYVIEAVQEFRREDATTPVVLMGYLNPIEIHGTRRFAETAVAAGIDGVLLVDLPPEEADETRAIFTEVGLALIALASPTTGEARLDMLCSTAQGYLYYVSFSGVTGAADRLDTHAASDRLRQLRARAGAPVVAGFGIKDAASAAAMAVDADGVVVGSALVAALADASDVRSARERAEDFLQPLRQALDAG</sequence>
<reference key="1">
    <citation type="journal article" date="2008" name="J. Biotechnol.">
        <title>The genome of Xanthomonas campestris pv. campestris B100 and its use for the reconstruction of metabolic pathways involved in xanthan biosynthesis.</title>
        <authorList>
            <person name="Vorhoelter F.-J."/>
            <person name="Schneiker S."/>
            <person name="Goesmann A."/>
            <person name="Krause L."/>
            <person name="Bekel T."/>
            <person name="Kaiser O."/>
            <person name="Linke B."/>
            <person name="Patschkowski T."/>
            <person name="Rueckert C."/>
            <person name="Schmid J."/>
            <person name="Sidhu V.K."/>
            <person name="Sieber V."/>
            <person name="Tauch A."/>
            <person name="Watt S.A."/>
            <person name="Weisshaar B."/>
            <person name="Becker A."/>
            <person name="Niehaus K."/>
            <person name="Puehler A."/>
        </authorList>
    </citation>
    <scope>NUCLEOTIDE SEQUENCE [LARGE SCALE GENOMIC DNA]</scope>
    <source>
        <strain>B100</strain>
    </source>
</reference>
<gene>
    <name evidence="1" type="primary">trpA</name>
    <name type="ordered locus">xcc-b100_1621</name>
</gene>